<evidence type="ECO:0000255" key="1">
    <source>
        <dbReference type="HAMAP-Rule" id="MF_01318"/>
    </source>
</evidence>
<evidence type="ECO:0000305" key="2"/>
<protein>
    <recommendedName>
        <fullName evidence="1">Large ribosomal subunit protein uL1</fullName>
    </recommendedName>
    <alternativeName>
        <fullName evidence="2">50S ribosomal protein L1</fullName>
    </alternativeName>
</protein>
<sequence>MAKLTKRQKAIAGKIEAGKAYNFVEAAALLTELSTVKFSESVDVAVNLGVDPRKSDQVVRSATVLPHGTGKTVRVAVFTQGPAAEAALAAGADRVGMDDLAAEMKGGDLNYDVVIASPDAMRVVGQLGQVLGPRGLMPNPKVGTVTPDVASAVKNAKAGQVRYRTDKNGIIHTSVGKVGFDAVKLKENVEALIADLKRIKPASSKGIYVKRVTLSTTMGPGLVIDQGSLDV</sequence>
<organism>
    <name type="scientific">Pseudomonas fluorescens (strain ATCC BAA-477 / NRRL B-23932 / Pf-5)</name>
    <dbReference type="NCBI Taxonomy" id="220664"/>
    <lineage>
        <taxon>Bacteria</taxon>
        <taxon>Pseudomonadati</taxon>
        <taxon>Pseudomonadota</taxon>
        <taxon>Gammaproteobacteria</taxon>
        <taxon>Pseudomonadales</taxon>
        <taxon>Pseudomonadaceae</taxon>
        <taxon>Pseudomonas</taxon>
    </lineage>
</organism>
<name>RL1_PSEF5</name>
<gene>
    <name evidence="1" type="primary">rplA</name>
    <name type="ordered locus">PFL_5592</name>
</gene>
<comment type="function">
    <text evidence="1">Binds directly to 23S rRNA. The L1 stalk is quite mobile in the ribosome, and is involved in E site tRNA release.</text>
</comment>
<comment type="function">
    <text evidence="1">Protein L1 is also a translational repressor protein, it controls the translation of the L11 operon by binding to its mRNA.</text>
</comment>
<comment type="subunit">
    <text evidence="1">Part of the 50S ribosomal subunit.</text>
</comment>
<comment type="similarity">
    <text evidence="1">Belongs to the universal ribosomal protein uL1 family.</text>
</comment>
<reference key="1">
    <citation type="journal article" date="2005" name="Nat. Biotechnol.">
        <title>Complete genome sequence of the plant commensal Pseudomonas fluorescens Pf-5.</title>
        <authorList>
            <person name="Paulsen I.T."/>
            <person name="Press C.M."/>
            <person name="Ravel J."/>
            <person name="Kobayashi D.Y."/>
            <person name="Myers G.S.A."/>
            <person name="Mavrodi D.V."/>
            <person name="DeBoy R.T."/>
            <person name="Seshadri R."/>
            <person name="Ren Q."/>
            <person name="Madupu R."/>
            <person name="Dodson R.J."/>
            <person name="Durkin A.S."/>
            <person name="Brinkac L.M."/>
            <person name="Daugherty S.C."/>
            <person name="Sullivan S.A."/>
            <person name="Rosovitz M.J."/>
            <person name="Gwinn M.L."/>
            <person name="Zhou L."/>
            <person name="Schneider D.J."/>
            <person name="Cartinhour S.W."/>
            <person name="Nelson W.C."/>
            <person name="Weidman J."/>
            <person name="Watkins K."/>
            <person name="Tran K."/>
            <person name="Khouri H."/>
            <person name="Pierson E.A."/>
            <person name="Pierson L.S. III"/>
            <person name="Thomashow L.S."/>
            <person name="Loper J.E."/>
        </authorList>
    </citation>
    <scope>NUCLEOTIDE SEQUENCE [LARGE SCALE GENOMIC DNA]</scope>
    <source>
        <strain>ATCC BAA-477 / NRRL B-23932 / Pf-5</strain>
    </source>
</reference>
<keyword id="KW-0678">Repressor</keyword>
<keyword id="KW-0687">Ribonucleoprotein</keyword>
<keyword id="KW-0689">Ribosomal protein</keyword>
<keyword id="KW-0694">RNA-binding</keyword>
<keyword id="KW-0699">rRNA-binding</keyword>
<keyword id="KW-0810">Translation regulation</keyword>
<keyword id="KW-0820">tRNA-binding</keyword>
<proteinExistence type="inferred from homology"/>
<dbReference type="EMBL" id="CP000076">
    <property type="protein sequence ID" value="AAY94797.1"/>
    <property type="molecule type" value="Genomic_DNA"/>
</dbReference>
<dbReference type="RefSeq" id="WP_011063782.1">
    <property type="nucleotide sequence ID" value="NC_004129.6"/>
</dbReference>
<dbReference type="SMR" id="Q4K523"/>
<dbReference type="STRING" id="220664.PFL_5592"/>
<dbReference type="GeneID" id="57478541"/>
<dbReference type="KEGG" id="pfl:PFL_5592"/>
<dbReference type="eggNOG" id="COG0081">
    <property type="taxonomic scope" value="Bacteria"/>
</dbReference>
<dbReference type="HOGENOM" id="CLU_062853_0_0_6"/>
<dbReference type="Proteomes" id="UP000008540">
    <property type="component" value="Chromosome"/>
</dbReference>
<dbReference type="GO" id="GO:0022625">
    <property type="term" value="C:cytosolic large ribosomal subunit"/>
    <property type="evidence" value="ECO:0007669"/>
    <property type="project" value="TreeGrafter"/>
</dbReference>
<dbReference type="GO" id="GO:0019843">
    <property type="term" value="F:rRNA binding"/>
    <property type="evidence" value="ECO:0007669"/>
    <property type="project" value="UniProtKB-UniRule"/>
</dbReference>
<dbReference type="GO" id="GO:0003735">
    <property type="term" value="F:structural constituent of ribosome"/>
    <property type="evidence" value="ECO:0007669"/>
    <property type="project" value="InterPro"/>
</dbReference>
<dbReference type="GO" id="GO:0000049">
    <property type="term" value="F:tRNA binding"/>
    <property type="evidence" value="ECO:0007669"/>
    <property type="project" value="UniProtKB-KW"/>
</dbReference>
<dbReference type="GO" id="GO:0006417">
    <property type="term" value="P:regulation of translation"/>
    <property type="evidence" value="ECO:0007669"/>
    <property type="project" value="UniProtKB-KW"/>
</dbReference>
<dbReference type="GO" id="GO:0006412">
    <property type="term" value="P:translation"/>
    <property type="evidence" value="ECO:0007669"/>
    <property type="project" value="UniProtKB-UniRule"/>
</dbReference>
<dbReference type="CDD" id="cd00403">
    <property type="entry name" value="Ribosomal_L1"/>
    <property type="match status" value="1"/>
</dbReference>
<dbReference type="FunFam" id="3.40.50.790:FF:000001">
    <property type="entry name" value="50S ribosomal protein L1"/>
    <property type="match status" value="1"/>
</dbReference>
<dbReference type="Gene3D" id="3.30.190.20">
    <property type="match status" value="1"/>
</dbReference>
<dbReference type="Gene3D" id="3.40.50.790">
    <property type="match status" value="1"/>
</dbReference>
<dbReference type="HAMAP" id="MF_01318_B">
    <property type="entry name" value="Ribosomal_uL1_B"/>
    <property type="match status" value="1"/>
</dbReference>
<dbReference type="InterPro" id="IPR005878">
    <property type="entry name" value="Ribosom_uL1_bac-type"/>
</dbReference>
<dbReference type="InterPro" id="IPR002143">
    <property type="entry name" value="Ribosomal_uL1"/>
</dbReference>
<dbReference type="InterPro" id="IPR023674">
    <property type="entry name" value="Ribosomal_uL1-like"/>
</dbReference>
<dbReference type="InterPro" id="IPR028364">
    <property type="entry name" value="Ribosomal_uL1/biogenesis"/>
</dbReference>
<dbReference type="InterPro" id="IPR016095">
    <property type="entry name" value="Ribosomal_uL1_3-a/b-sand"/>
</dbReference>
<dbReference type="InterPro" id="IPR023673">
    <property type="entry name" value="Ribosomal_uL1_CS"/>
</dbReference>
<dbReference type="NCBIfam" id="TIGR01169">
    <property type="entry name" value="rplA_bact"/>
    <property type="match status" value="1"/>
</dbReference>
<dbReference type="PANTHER" id="PTHR36427">
    <property type="entry name" value="54S RIBOSOMAL PROTEIN L1, MITOCHONDRIAL"/>
    <property type="match status" value="1"/>
</dbReference>
<dbReference type="PANTHER" id="PTHR36427:SF3">
    <property type="entry name" value="LARGE RIBOSOMAL SUBUNIT PROTEIN UL1M"/>
    <property type="match status" value="1"/>
</dbReference>
<dbReference type="Pfam" id="PF00687">
    <property type="entry name" value="Ribosomal_L1"/>
    <property type="match status" value="1"/>
</dbReference>
<dbReference type="PIRSF" id="PIRSF002155">
    <property type="entry name" value="Ribosomal_L1"/>
    <property type="match status" value="1"/>
</dbReference>
<dbReference type="SUPFAM" id="SSF56808">
    <property type="entry name" value="Ribosomal protein L1"/>
    <property type="match status" value="1"/>
</dbReference>
<dbReference type="PROSITE" id="PS01199">
    <property type="entry name" value="RIBOSOMAL_L1"/>
    <property type="match status" value="1"/>
</dbReference>
<feature type="chain" id="PRO_0000230626" description="Large ribosomal subunit protein uL1">
    <location>
        <begin position="1"/>
        <end position="231"/>
    </location>
</feature>
<accession>Q4K523</accession>